<organism>
    <name type="scientific">Arabidopsis thaliana</name>
    <name type="common">Mouse-ear cress</name>
    <dbReference type="NCBI Taxonomy" id="3702"/>
    <lineage>
        <taxon>Eukaryota</taxon>
        <taxon>Viridiplantae</taxon>
        <taxon>Streptophyta</taxon>
        <taxon>Embryophyta</taxon>
        <taxon>Tracheophyta</taxon>
        <taxon>Spermatophyta</taxon>
        <taxon>Magnoliopsida</taxon>
        <taxon>eudicotyledons</taxon>
        <taxon>Gunneridae</taxon>
        <taxon>Pentapetalae</taxon>
        <taxon>rosids</taxon>
        <taxon>malvids</taxon>
        <taxon>Brassicales</taxon>
        <taxon>Brassicaceae</taxon>
        <taxon>Camelineae</taxon>
        <taxon>Arabidopsis</taxon>
    </lineage>
</organism>
<protein>
    <recommendedName>
        <fullName evidence="3">Thiamine pyrophosphokinase 2</fullName>
        <shortName evidence="3">AtTPK2</shortName>
        <ecNumber evidence="1">2.7.6.2</ecNumber>
    </recommendedName>
    <alternativeName>
        <fullName evidence="3">Thiamine kinase 2</fullName>
    </alternativeName>
</protein>
<name>TPK2_ARATH</name>
<dbReference type="EC" id="2.7.6.2" evidence="1"/>
<dbReference type="EMBL" id="AC003672">
    <property type="protein sequence ID" value="AAC27477.2"/>
    <property type="molecule type" value="Genomic_DNA"/>
</dbReference>
<dbReference type="EMBL" id="CP002685">
    <property type="protein sequence ID" value="AEC10463.1"/>
    <property type="molecule type" value="Genomic_DNA"/>
</dbReference>
<dbReference type="EMBL" id="CP002685">
    <property type="protein sequence ID" value="AEC10464.1"/>
    <property type="molecule type" value="Genomic_DNA"/>
</dbReference>
<dbReference type="EMBL" id="AY042898">
    <property type="protein sequence ID" value="AAK68838.1"/>
    <property type="molecule type" value="mRNA"/>
</dbReference>
<dbReference type="EMBL" id="AY081493">
    <property type="protein sequence ID" value="AAM10055.1"/>
    <property type="molecule type" value="mRNA"/>
</dbReference>
<dbReference type="PIR" id="T01602">
    <property type="entry name" value="T01602"/>
</dbReference>
<dbReference type="RefSeq" id="NP_566026.1">
    <molecule id="F4IV16-2"/>
    <property type="nucleotide sequence ID" value="NM_130040.3"/>
</dbReference>
<dbReference type="RefSeq" id="NP_850424.1">
    <molecule id="F4IV16-1"/>
    <property type="nucleotide sequence ID" value="NM_180093.2"/>
</dbReference>
<dbReference type="SMR" id="F4IV16"/>
<dbReference type="FunCoup" id="F4IV16">
    <property type="interactions" value="1598"/>
</dbReference>
<dbReference type="STRING" id="3702.F4IV16"/>
<dbReference type="PaxDb" id="3702-AT2G44750.2"/>
<dbReference type="ProteomicsDB" id="232405">
    <molecule id="F4IV16-1"/>
</dbReference>
<dbReference type="EnsemblPlants" id="AT2G44750.1">
    <molecule id="F4IV16-2"/>
    <property type="protein sequence ID" value="AT2G44750.1"/>
    <property type="gene ID" value="AT2G44750"/>
</dbReference>
<dbReference type="EnsemblPlants" id="AT2G44750.2">
    <molecule id="F4IV16-1"/>
    <property type="protein sequence ID" value="AT2G44750.2"/>
    <property type="gene ID" value="AT2G44750"/>
</dbReference>
<dbReference type="GeneID" id="819084"/>
<dbReference type="Gramene" id="AT2G44750.1">
    <molecule id="F4IV16-2"/>
    <property type="protein sequence ID" value="AT2G44750.1"/>
    <property type="gene ID" value="AT2G44750"/>
</dbReference>
<dbReference type="Gramene" id="AT2G44750.2">
    <molecule id="F4IV16-1"/>
    <property type="protein sequence ID" value="AT2G44750.2"/>
    <property type="gene ID" value="AT2G44750"/>
</dbReference>
<dbReference type="KEGG" id="ath:AT2G44750"/>
<dbReference type="Araport" id="AT2G44750"/>
<dbReference type="TAIR" id="AT2G44750">
    <property type="gene designation" value="TPK2"/>
</dbReference>
<dbReference type="eggNOG" id="KOG3153">
    <property type="taxonomic scope" value="Eukaryota"/>
</dbReference>
<dbReference type="InParanoid" id="F4IV16"/>
<dbReference type="OMA" id="HHLYMMT"/>
<dbReference type="OrthoDB" id="25149at2759"/>
<dbReference type="PhylomeDB" id="F4IV16"/>
<dbReference type="BioCyc" id="MetaCyc:AT2G44750-MONOMER"/>
<dbReference type="BRENDA" id="2.7.6.2">
    <property type="organism ID" value="399"/>
</dbReference>
<dbReference type="SABIO-RK" id="F4IV16"/>
<dbReference type="UniPathway" id="UPA00060">
    <property type="reaction ID" value="UER00597"/>
</dbReference>
<dbReference type="PRO" id="PR:F4IV16"/>
<dbReference type="Proteomes" id="UP000006548">
    <property type="component" value="Chromosome 2"/>
</dbReference>
<dbReference type="ExpressionAtlas" id="F4IV16">
    <property type="expression patterns" value="baseline and differential"/>
</dbReference>
<dbReference type="GO" id="GO:0005829">
    <property type="term" value="C:cytosol"/>
    <property type="evidence" value="ECO:0000314"/>
    <property type="project" value="TAIR"/>
</dbReference>
<dbReference type="GO" id="GO:0005524">
    <property type="term" value="F:ATP binding"/>
    <property type="evidence" value="ECO:0007669"/>
    <property type="project" value="UniProtKB-KW"/>
</dbReference>
<dbReference type="GO" id="GO:0016301">
    <property type="term" value="F:kinase activity"/>
    <property type="evidence" value="ECO:0007669"/>
    <property type="project" value="UniProtKB-KW"/>
</dbReference>
<dbReference type="GO" id="GO:0030975">
    <property type="term" value="F:thiamine binding"/>
    <property type="evidence" value="ECO:0007669"/>
    <property type="project" value="InterPro"/>
</dbReference>
<dbReference type="GO" id="GO:0004788">
    <property type="term" value="F:thiamine diphosphokinase activity"/>
    <property type="evidence" value="ECO:0000314"/>
    <property type="project" value="TAIR"/>
</dbReference>
<dbReference type="GO" id="GO:0009229">
    <property type="term" value="P:thiamine diphosphate biosynthetic process"/>
    <property type="evidence" value="ECO:0007669"/>
    <property type="project" value="UniProtKB-UniPathway"/>
</dbReference>
<dbReference type="GO" id="GO:0006772">
    <property type="term" value="P:thiamine metabolic process"/>
    <property type="evidence" value="ECO:0000316"/>
    <property type="project" value="TAIR"/>
</dbReference>
<dbReference type="CDD" id="cd07995">
    <property type="entry name" value="TPK"/>
    <property type="match status" value="1"/>
</dbReference>
<dbReference type="FunFam" id="2.60.120.320:FF:000001">
    <property type="entry name" value="Thiamine pyrophosphokinase"/>
    <property type="match status" value="1"/>
</dbReference>
<dbReference type="FunFam" id="3.40.50.10240:FF:000001">
    <property type="entry name" value="Thiamine pyrophosphokinase"/>
    <property type="match status" value="1"/>
</dbReference>
<dbReference type="Gene3D" id="3.40.50.10240">
    <property type="entry name" value="Thiamin pyrophosphokinase, catalytic domain"/>
    <property type="match status" value="1"/>
</dbReference>
<dbReference type="Gene3D" id="2.60.120.320">
    <property type="entry name" value="Thiamin pyrophosphokinase, thiamin-binding domain"/>
    <property type="match status" value="1"/>
</dbReference>
<dbReference type="InterPro" id="IPR006282">
    <property type="entry name" value="Thi_PPkinase"/>
</dbReference>
<dbReference type="InterPro" id="IPR016966">
    <property type="entry name" value="Thiamin_pyrophosphokinase_euk"/>
</dbReference>
<dbReference type="InterPro" id="IPR007373">
    <property type="entry name" value="Thiamin_PyroPKinase_B1-bd"/>
</dbReference>
<dbReference type="InterPro" id="IPR036371">
    <property type="entry name" value="TPK_B1-bd_sf"/>
</dbReference>
<dbReference type="InterPro" id="IPR007371">
    <property type="entry name" value="TPK_catalytic"/>
</dbReference>
<dbReference type="InterPro" id="IPR036759">
    <property type="entry name" value="TPK_catalytic_sf"/>
</dbReference>
<dbReference type="NCBIfam" id="TIGR01378">
    <property type="entry name" value="thi_PPkinase"/>
    <property type="match status" value="1"/>
</dbReference>
<dbReference type="PANTHER" id="PTHR13622">
    <property type="entry name" value="THIAMIN PYROPHOSPHOKINASE"/>
    <property type="match status" value="1"/>
</dbReference>
<dbReference type="PANTHER" id="PTHR13622:SF8">
    <property type="entry name" value="THIAMIN PYROPHOSPHOKINASE 1"/>
    <property type="match status" value="1"/>
</dbReference>
<dbReference type="Pfam" id="PF04265">
    <property type="entry name" value="TPK_B1_binding"/>
    <property type="match status" value="1"/>
</dbReference>
<dbReference type="Pfam" id="PF04263">
    <property type="entry name" value="TPK_catalytic"/>
    <property type="match status" value="1"/>
</dbReference>
<dbReference type="PIRSF" id="PIRSF031057">
    <property type="entry name" value="Thiamin_pyrophosphokinase"/>
    <property type="match status" value="1"/>
</dbReference>
<dbReference type="SMART" id="SM00983">
    <property type="entry name" value="TPK_B1_binding"/>
    <property type="match status" value="1"/>
</dbReference>
<dbReference type="SUPFAM" id="SSF63999">
    <property type="entry name" value="Thiamin pyrophosphokinase, catalytic domain"/>
    <property type="match status" value="1"/>
</dbReference>
<dbReference type="SUPFAM" id="SSF63862">
    <property type="entry name" value="Thiamin pyrophosphokinase, substrate-binding domain"/>
    <property type="match status" value="1"/>
</dbReference>
<evidence type="ECO:0000269" key="1">
    <source>
    </source>
</evidence>
<evidence type="ECO:0000303" key="2">
    <source>
    </source>
</evidence>
<evidence type="ECO:0000303" key="3">
    <source>
    </source>
</evidence>
<evidence type="ECO:0000305" key="4"/>
<evidence type="ECO:0000312" key="5">
    <source>
        <dbReference type="Araport" id="AT2G44750"/>
    </source>
</evidence>
<evidence type="ECO:0000312" key="6">
    <source>
        <dbReference type="EMBL" id="AAC27477.2"/>
    </source>
</evidence>
<gene>
    <name evidence="3" type="primary">TPK2</name>
    <name evidence="5" type="ordered locus">At2g44750</name>
    <name evidence="6" type="ORF">F16B22.24</name>
</gene>
<keyword id="KW-0025">Alternative splicing</keyword>
<keyword id="KW-0067">ATP-binding</keyword>
<keyword id="KW-0963">Cytoplasm</keyword>
<keyword id="KW-0418">Kinase</keyword>
<keyword id="KW-0547">Nucleotide-binding</keyword>
<keyword id="KW-1185">Reference proteome</keyword>
<keyword id="KW-0808">Transferase</keyword>
<sequence length="267" mass="30214">MLSAMDVMIHSSSFLLPCDETCGTRYALVVLNQNLPRFTPLLWEHAKLRLCADGGANRIYDELPLFFPHEDPFVIRNRYKPDVIKGDMDSIRRDVLDFYVYWGTKVIDESHDQDTTDLDKCISYIRHSTLNQESSRLQILATGALGGRFDHEAGNLNVLYRYPDTRIVLLSDDCLIQLLPKTHRHEIHIHSSLQGPHCGLIPIGTPSANTTTSGLKWDLSNTEMRFGGLISTSNLVKEEIITVESDSDLLWTISIKKTGLPVQDHKP</sequence>
<accession>F4IV16</accession>
<accession>O80514</accession>
<accession>Q94B25</accession>
<comment type="function">
    <text evidence="1">Catalyzes the phosphorylation of thiamine to thiamine pyrophosphate (TPP) (PubMed:17611796). TPP is an active cofactor for enzymes involved in glycolysis and energy production (PubMed:17611796). Plant leaves require high levels of TPP for photosynthesis and carbohydrate metabolism (PubMed:17611796).</text>
</comment>
<comment type="catalytic activity">
    <reaction evidence="1">
        <text>thiamine + ATP = thiamine diphosphate + AMP + H(+)</text>
        <dbReference type="Rhea" id="RHEA:11576"/>
        <dbReference type="ChEBI" id="CHEBI:15378"/>
        <dbReference type="ChEBI" id="CHEBI:18385"/>
        <dbReference type="ChEBI" id="CHEBI:30616"/>
        <dbReference type="ChEBI" id="CHEBI:58937"/>
        <dbReference type="ChEBI" id="CHEBI:456215"/>
        <dbReference type="EC" id="2.7.6.2"/>
    </reaction>
    <physiologicalReaction direction="left-to-right" evidence="1">
        <dbReference type="Rhea" id="RHEA:11577"/>
    </physiologicalReaction>
</comment>
<comment type="biophysicochemical properties">
    <kinetics>
        <KM evidence="1">0.96 uM for thiamine</KM>
        <Vmax evidence="1">8.4 pmol/min/mg enzyme with thiamine as substrate</Vmax>
    </kinetics>
    <phDependence>
        <text evidence="1">Optimum pH is 7. Active between pH 6 and pH 8.</text>
    </phDependence>
    <temperatureDependence>
        <text evidence="1">Optimum temperature is 45 degrees Celsius.</text>
    </temperatureDependence>
</comment>
<comment type="pathway">
    <text evidence="1">Cofactor biosynthesis; thiamine diphosphate biosynthesis; thiamine diphosphate from thiamine: step 1/1.</text>
</comment>
<comment type="subcellular location">
    <subcellularLocation>
        <location evidence="1">Cytoplasm</location>
        <location evidence="1">Cytosol</location>
    </subcellularLocation>
</comment>
<comment type="alternative products">
    <event type="alternative splicing"/>
    <isoform>
        <id>F4IV16-1</id>
        <name>1</name>
        <sequence type="displayed"/>
    </isoform>
    <isoform>
        <id>F4IV16-2</id>
        <name>2</name>
        <sequence type="described" ref="VSP_053287"/>
    </isoform>
</comment>
<comment type="tissue specificity">
    <text evidence="1">Expressed in leaves and at lower levels in flowers.</text>
</comment>
<comment type="disruption phenotype">
    <text evidence="1">No visible phenotype under normal growth conditions (PubMed:17611796). Tpk1 and tpk2 double mutants exhibit a seedling lethal phenotype (PubMed:17611796).</text>
</comment>
<comment type="similarity">
    <text evidence="4">Belongs to the thiamine pyrophosphokinase family.</text>
</comment>
<feature type="chain" id="PRO_0000423967" description="Thiamine pyrophosphokinase 2">
    <location>
        <begin position="1"/>
        <end position="267"/>
    </location>
</feature>
<feature type="splice variant" id="VSP_053287" description="In isoform 2." evidence="2">
    <location>
        <begin position="137"/>
        <end position="138"/>
    </location>
</feature>
<proteinExistence type="evidence at protein level"/>
<reference key="1">
    <citation type="journal article" date="1999" name="Nature">
        <title>Sequence and analysis of chromosome 2 of the plant Arabidopsis thaliana.</title>
        <authorList>
            <person name="Lin X."/>
            <person name="Kaul S."/>
            <person name="Rounsley S.D."/>
            <person name="Shea T.P."/>
            <person name="Benito M.-I."/>
            <person name="Town C.D."/>
            <person name="Fujii C.Y."/>
            <person name="Mason T.M."/>
            <person name="Bowman C.L."/>
            <person name="Barnstead M.E."/>
            <person name="Feldblyum T.V."/>
            <person name="Buell C.R."/>
            <person name="Ketchum K.A."/>
            <person name="Lee J.J."/>
            <person name="Ronning C.M."/>
            <person name="Koo H.L."/>
            <person name="Moffat K.S."/>
            <person name="Cronin L.A."/>
            <person name="Shen M."/>
            <person name="Pai G."/>
            <person name="Van Aken S."/>
            <person name="Umayam L."/>
            <person name="Tallon L.J."/>
            <person name="Gill J.E."/>
            <person name="Adams M.D."/>
            <person name="Carrera A.J."/>
            <person name="Creasy T.H."/>
            <person name="Goodman H.M."/>
            <person name="Somerville C.R."/>
            <person name="Copenhaver G.P."/>
            <person name="Preuss D."/>
            <person name="Nierman W.C."/>
            <person name="White O."/>
            <person name="Eisen J.A."/>
            <person name="Salzberg S.L."/>
            <person name="Fraser C.M."/>
            <person name="Venter J.C."/>
        </authorList>
    </citation>
    <scope>NUCLEOTIDE SEQUENCE [LARGE SCALE GENOMIC DNA]</scope>
    <source>
        <strain>cv. Columbia</strain>
    </source>
</reference>
<reference key="2">
    <citation type="journal article" date="2017" name="Plant J.">
        <title>Araport11: a complete reannotation of the Arabidopsis thaliana reference genome.</title>
        <authorList>
            <person name="Cheng C.Y."/>
            <person name="Krishnakumar V."/>
            <person name="Chan A.P."/>
            <person name="Thibaud-Nissen F."/>
            <person name="Schobel S."/>
            <person name="Town C.D."/>
        </authorList>
    </citation>
    <scope>GENOME REANNOTATION</scope>
    <source>
        <strain>cv. Columbia</strain>
    </source>
</reference>
<reference key="3">
    <citation type="journal article" date="2003" name="Science">
        <title>Empirical analysis of transcriptional activity in the Arabidopsis genome.</title>
        <authorList>
            <person name="Yamada K."/>
            <person name="Lim J."/>
            <person name="Dale J.M."/>
            <person name="Chen H."/>
            <person name="Shinn P."/>
            <person name="Palm C.J."/>
            <person name="Southwick A.M."/>
            <person name="Wu H.C."/>
            <person name="Kim C.J."/>
            <person name="Nguyen M."/>
            <person name="Pham P.K."/>
            <person name="Cheuk R.F."/>
            <person name="Karlin-Newmann G."/>
            <person name="Liu S.X."/>
            <person name="Lam B."/>
            <person name="Sakano H."/>
            <person name="Wu T."/>
            <person name="Yu G."/>
            <person name="Miranda M."/>
            <person name="Quach H.L."/>
            <person name="Tripp M."/>
            <person name="Chang C.H."/>
            <person name="Lee J.M."/>
            <person name="Toriumi M.J."/>
            <person name="Chan M.M."/>
            <person name="Tang C.C."/>
            <person name="Onodera C.S."/>
            <person name="Deng J.M."/>
            <person name="Akiyama K."/>
            <person name="Ansari Y."/>
            <person name="Arakawa T."/>
            <person name="Banh J."/>
            <person name="Banno F."/>
            <person name="Bowser L."/>
            <person name="Brooks S.Y."/>
            <person name="Carninci P."/>
            <person name="Chao Q."/>
            <person name="Choy N."/>
            <person name="Enju A."/>
            <person name="Goldsmith A.D."/>
            <person name="Gurjal M."/>
            <person name="Hansen N.F."/>
            <person name="Hayashizaki Y."/>
            <person name="Johnson-Hopson C."/>
            <person name="Hsuan V.W."/>
            <person name="Iida K."/>
            <person name="Karnes M."/>
            <person name="Khan S."/>
            <person name="Koesema E."/>
            <person name="Ishida J."/>
            <person name="Jiang P.X."/>
            <person name="Jones T."/>
            <person name="Kawai J."/>
            <person name="Kamiya A."/>
            <person name="Meyers C."/>
            <person name="Nakajima M."/>
            <person name="Narusaka M."/>
            <person name="Seki M."/>
            <person name="Sakurai T."/>
            <person name="Satou M."/>
            <person name="Tamse R."/>
            <person name="Vaysberg M."/>
            <person name="Wallender E.K."/>
            <person name="Wong C."/>
            <person name="Yamamura Y."/>
            <person name="Yuan S."/>
            <person name="Shinozaki K."/>
            <person name="Davis R.W."/>
            <person name="Theologis A."/>
            <person name="Ecker J.R."/>
        </authorList>
    </citation>
    <scope>NUCLEOTIDE SEQUENCE [LARGE SCALE MRNA] (ISOFORM 2)</scope>
    <source>
        <strain>cv. Columbia</strain>
    </source>
</reference>
<reference key="4">
    <citation type="journal article" date="2007" name="Plant Mol. Biol.">
        <title>Thiamin pyrophosphokinase is required for thiamin cofactor activation in Arabidopsis.</title>
        <authorList>
            <person name="Ajjawi I."/>
            <person name="Rodriguez Milla M.A."/>
            <person name="Cushman J."/>
            <person name="Shintani D.K."/>
        </authorList>
    </citation>
    <scope>FUNCTION</scope>
    <scope>CATALYTIC ACTIVITY</scope>
    <scope>BIOPHYSICOCHEMICAL PROPERTIES</scope>
    <scope>PATHWAY</scope>
    <scope>SUBCELLULAR LOCATION</scope>
    <scope>TISSUE SPECIFICITY</scope>
    <scope>DISRUPTION PHENOTYPE</scope>
</reference>